<accession>Q54Z27</accession>
<proteinExistence type="inferred from homology"/>
<sequence length="683" mass="78065">MEINKNDNNNNINNNNINNNNNNNNNNNNNNNNNNNNNNNNNNNNNNNNNQNNNQKNNYRNYKPIKTGTLIQHQILQQTLSNFQTKNKVFQLGSDKLILIFKENETIYFHGTIQARSIIGSVEVYGYTITPQSTTYYPIYSPFCSPTLSITSNNSNNKLYTLKEIIENQLIKIPELVKNKLKENEKQIEIDEPTLAISSIIVLKILDDHCENPKMFTKKKIEIIDSFKLLKGFYPLYQPDFNTQLLTIPNEWLNLINTQFLYNDHCNNNGLSILTCGERNVGKSTFNRILINKLLKKYTHIIFIETDTGQTEFTPSGIMSIDIINSPLLGPPFTHCKNNPLKSYFFGDTSPKNNPEYFLNLSFQLIDCCNLIKQQYPNIPIILNTNGWLKSLGLHLTQEIIKYFKPTSIVQLINNNNNNNNNNNNNNNNNNNNNNNNNNLNDNLNNFINRFDSTVTFSQDCINQLFEDCDDDNDDNKNLKTTIITKLYSINSINNFSQSIYKPIFNLGSSEIRNLMFKSYFKLESKGSLSHQSPYQVSWKELKVKILTNNVPPSQTMYALNASLVGICIDEDPEKNYKYISYKVGNNLPTIINQSPLISQCIGLGLIRSIDMVNGYYYIITPIDPSLLEISNTILKGSIEIPQTLTISVSSKGKILVPYLQLDVLSSYGTGSDVMNRPSFFDD</sequence>
<protein>
    <recommendedName>
        <fullName>Polynucleotide 5'-hydroxyl-kinase nol9</fullName>
        <ecNumber>2.7.1.-</ecNumber>
    </recommendedName>
    <alternativeName>
        <fullName>Nucleolar protein 9 homolog</fullName>
    </alternativeName>
</protein>
<feature type="chain" id="PRO_0000368209" description="Polynucleotide 5'-hydroxyl-kinase nol9">
    <location>
        <begin position="1"/>
        <end position="683"/>
    </location>
</feature>
<feature type="region of interest" description="Disordered" evidence="3">
    <location>
        <begin position="1"/>
        <end position="61"/>
    </location>
</feature>
<feature type="region of interest" description="Disordered" evidence="3">
    <location>
        <begin position="414"/>
        <end position="442"/>
    </location>
</feature>
<feature type="coiled-coil region" evidence="2">
    <location>
        <begin position="420"/>
        <end position="454"/>
    </location>
</feature>
<feature type="compositionally biased region" description="Low complexity" evidence="3">
    <location>
        <begin position="1"/>
        <end position="58"/>
    </location>
</feature>
<feature type="binding site" evidence="2">
    <location>
        <begin position="277"/>
        <end position="284"/>
    </location>
    <ligand>
        <name>ATP</name>
        <dbReference type="ChEBI" id="CHEBI:30616"/>
    </ligand>
</feature>
<organism>
    <name type="scientific">Dictyostelium discoideum</name>
    <name type="common">Social amoeba</name>
    <dbReference type="NCBI Taxonomy" id="44689"/>
    <lineage>
        <taxon>Eukaryota</taxon>
        <taxon>Amoebozoa</taxon>
        <taxon>Evosea</taxon>
        <taxon>Eumycetozoa</taxon>
        <taxon>Dictyostelia</taxon>
        <taxon>Dictyosteliales</taxon>
        <taxon>Dictyosteliaceae</taxon>
        <taxon>Dictyostelium</taxon>
    </lineage>
</organism>
<dbReference type="EC" id="2.7.1.-"/>
<dbReference type="EMBL" id="AAFI02000023">
    <property type="protein sequence ID" value="EAL68145.1"/>
    <property type="molecule type" value="Genomic_DNA"/>
</dbReference>
<dbReference type="RefSeq" id="XP_642025.1">
    <property type="nucleotide sequence ID" value="XM_636933.1"/>
</dbReference>
<dbReference type="SMR" id="Q54Z27"/>
<dbReference type="FunCoup" id="Q54Z27">
    <property type="interactions" value="433"/>
</dbReference>
<dbReference type="STRING" id="44689.Q54Z27"/>
<dbReference type="PaxDb" id="44689-DDB0237577"/>
<dbReference type="EnsemblProtists" id="EAL68145">
    <property type="protein sequence ID" value="EAL68145"/>
    <property type="gene ID" value="DDB_G0277945"/>
</dbReference>
<dbReference type="GeneID" id="8621236"/>
<dbReference type="KEGG" id="ddi:DDB_G0277945"/>
<dbReference type="dictyBase" id="DDB_G0277945">
    <property type="gene designation" value="nol9"/>
</dbReference>
<dbReference type="VEuPathDB" id="AmoebaDB:DDB_G0277945"/>
<dbReference type="eggNOG" id="KOG2750">
    <property type="taxonomic scope" value="Eukaryota"/>
</dbReference>
<dbReference type="HOGENOM" id="CLU_021128_2_0_1"/>
<dbReference type="InParanoid" id="Q54Z27"/>
<dbReference type="OMA" id="YFGETSC"/>
<dbReference type="PhylomeDB" id="Q54Z27"/>
<dbReference type="Reactome" id="R-DDI-6791226">
    <property type="pathway name" value="Major pathway of rRNA processing in the nucleolus and cytosol"/>
</dbReference>
<dbReference type="PRO" id="PR:Q54Z27"/>
<dbReference type="Proteomes" id="UP000002195">
    <property type="component" value="Chromosome 3"/>
</dbReference>
<dbReference type="GO" id="GO:0005730">
    <property type="term" value="C:nucleolus"/>
    <property type="evidence" value="ECO:0007669"/>
    <property type="project" value="UniProtKB-SubCell"/>
</dbReference>
<dbReference type="GO" id="GO:0005634">
    <property type="term" value="C:nucleus"/>
    <property type="evidence" value="ECO:0000318"/>
    <property type="project" value="GO_Central"/>
</dbReference>
<dbReference type="GO" id="GO:0005524">
    <property type="term" value="F:ATP binding"/>
    <property type="evidence" value="ECO:0007669"/>
    <property type="project" value="UniProtKB-KW"/>
</dbReference>
<dbReference type="GO" id="GO:0046404">
    <property type="term" value="F:ATP-dependent polydeoxyribonucleotide 5'-hydroxyl-kinase activity"/>
    <property type="evidence" value="ECO:0000250"/>
    <property type="project" value="UniProtKB"/>
</dbReference>
<dbReference type="GO" id="GO:0051731">
    <property type="term" value="F:polynucleotide 5'-hydroxyl-kinase activity"/>
    <property type="evidence" value="ECO:0000250"/>
    <property type="project" value="UniProtKB"/>
</dbReference>
<dbReference type="GO" id="GO:0000448">
    <property type="term" value="P:cleavage in ITS2 between 5.8S rRNA and LSU-rRNA of tricistronic rRNA transcript (SSU-rRNA, 5.8S rRNA, LSU-rRNA)"/>
    <property type="evidence" value="ECO:0000318"/>
    <property type="project" value="GO_Central"/>
</dbReference>
<dbReference type="GO" id="GO:0000460">
    <property type="term" value="P:maturation of 5.8S rRNA"/>
    <property type="evidence" value="ECO:0000250"/>
    <property type="project" value="UniProtKB"/>
</dbReference>
<dbReference type="GO" id="GO:0006364">
    <property type="term" value="P:rRNA processing"/>
    <property type="evidence" value="ECO:0000250"/>
    <property type="project" value="UniProtKB"/>
</dbReference>
<dbReference type="FunFam" id="3.40.50.300:FF:004944">
    <property type="entry name" value="Polynucleotide 5'-hydroxyl-kinase nol9"/>
    <property type="match status" value="1"/>
</dbReference>
<dbReference type="Gene3D" id="3.40.50.300">
    <property type="entry name" value="P-loop containing nucleotide triphosphate hydrolases"/>
    <property type="match status" value="1"/>
</dbReference>
<dbReference type="InterPro" id="IPR045116">
    <property type="entry name" value="Clp1/Grc3"/>
</dbReference>
<dbReference type="InterPro" id="IPR032319">
    <property type="entry name" value="CLP1_P"/>
</dbReference>
<dbReference type="InterPro" id="IPR027417">
    <property type="entry name" value="P-loop_NTPase"/>
</dbReference>
<dbReference type="PANTHER" id="PTHR12755">
    <property type="entry name" value="CLEAVAGE/POLYADENYLATION FACTOR IA SUBUNIT CLP1P"/>
    <property type="match status" value="1"/>
</dbReference>
<dbReference type="PANTHER" id="PTHR12755:SF3">
    <property type="entry name" value="POLYNUCLEOTIDE 5'-HYDROXYL-KINASE NOL9"/>
    <property type="match status" value="1"/>
</dbReference>
<dbReference type="Pfam" id="PF16575">
    <property type="entry name" value="CLP1_P"/>
    <property type="match status" value="1"/>
</dbReference>
<dbReference type="Pfam" id="PF24419">
    <property type="entry name" value="Cupin_NOL9"/>
    <property type="match status" value="1"/>
</dbReference>
<dbReference type="Pfam" id="PF25467">
    <property type="entry name" value="NOL9_C"/>
    <property type="match status" value="1"/>
</dbReference>
<evidence type="ECO:0000250" key="1"/>
<evidence type="ECO:0000255" key="2"/>
<evidence type="ECO:0000256" key="3">
    <source>
        <dbReference type="SAM" id="MobiDB-lite"/>
    </source>
</evidence>
<evidence type="ECO:0000305" key="4"/>
<reference key="1">
    <citation type="journal article" date="2005" name="Nature">
        <title>The genome of the social amoeba Dictyostelium discoideum.</title>
        <authorList>
            <person name="Eichinger L."/>
            <person name="Pachebat J.A."/>
            <person name="Gloeckner G."/>
            <person name="Rajandream M.A."/>
            <person name="Sucgang R."/>
            <person name="Berriman M."/>
            <person name="Song J."/>
            <person name="Olsen R."/>
            <person name="Szafranski K."/>
            <person name="Xu Q."/>
            <person name="Tunggal B."/>
            <person name="Kummerfeld S."/>
            <person name="Madera M."/>
            <person name="Konfortov B.A."/>
            <person name="Rivero F."/>
            <person name="Bankier A.T."/>
            <person name="Lehmann R."/>
            <person name="Hamlin N."/>
            <person name="Davies R."/>
            <person name="Gaudet P."/>
            <person name="Fey P."/>
            <person name="Pilcher K."/>
            <person name="Chen G."/>
            <person name="Saunders D."/>
            <person name="Sodergren E.J."/>
            <person name="Davis P."/>
            <person name="Kerhornou A."/>
            <person name="Nie X."/>
            <person name="Hall N."/>
            <person name="Anjard C."/>
            <person name="Hemphill L."/>
            <person name="Bason N."/>
            <person name="Farbrother P."/>
            <person name="Desany B."/>
            <person name="Just E."/>
            <person name="Morio T."/>
            <person name="Rost R."/>
            <person name="Churcher C.M."/>
            <person name="Cooper J."/>
            <person name="Haydock S."/>
            <person name="van Driessche N."/>
            <person name="Cronin A."/>
            <person name="Goodhead I."/>
            <person name="Muzny D.M."/>
            <person name="Mourier T."/>
            <person name="Pain A."/>
            <person name="Lu M."/>
            <person name="Harper D."/>
            <person name="Lindsay R."/>
            <person name="Hauser H."/>
            <person name="James K.D."/>
            <person name="Quiles M."/>
            <person name="Madan Babu M."/>
            <person name="Saito T."/>
            <person name="Buchrieser C."/>
            <person name="Wardroper A."/>
            <person name="Felder M."/>
            <person name="Thangavelu M."/>
            <person name="Johnson D."/>
            <person name="Knights A."/>
            <person name="Loulseged H."/>
            <person name="Mungall K.L."/>
            <person name="Oliver K."/>
            <person name="Price C."/>
            <person name="Quail M.A."/>
            <person name="Urushihara H."/>
            <person name="Hernandez J."/>
            <person name="Rabbinowitsch E."/>
            <person name="Steffen D."/>
            <person name="Sanders M."/>
            <person name="Ma J."/>
            <person name="Kohara Y."/>
            <person name="Sharp S."/>
            <person name="Simmonds M.N."/>
            <person name="Spiegler S."/>
            <person name="Tivey A."/>
            <person name="Sugano S."/>
            <person name="White B."/>
            <person name="Walker D."/>
            <person name="Woodward J.R."/>
            <person name="Winckler T."/>
            <person name="Tanaka Y."/>
            <person name="Shaulsky G."/>
            <person name="Schleicher M."/>
            <person name="Weinstock G.M."/>
            <person name="Rosenthal A."/>
            <person name="Cox E.C."/>
            <person name="Chisholm R.L."/>
            <person name="Gibbs R.A."/>
            <person name="Loomis W.F."/>
            <person name="Platzer M."/>
            <person name="Kay R.R."/>
            <person name="Williams J.G."/>
            <person name="Dear P.H."/>
            <person name="Noegel A.A."/>
            <person name="Barrell B.G."/>
            <person name="Kuspa A."/>
        </authorList>
    </citation>
    <scope>NUCLEOTIDE SEQUENCE [LARGE SCALE GENOMIC DNA]</scope>
    <source>
        <strain>AX4</strain>
    </source>
</reference>
<keyword id="KW-0067">ATP-binding</keyword>
<keyword id="KW-0175">Coiled coil</keyword>
<keyword id="KW-0418">Kinase</keyword>
<keyword id="KW-0547">Nucleotide-binding</keyword>
<keyword id="KW-0539">Nucleus</keyword>
<keyword id="KW-1185">Reference proteome</keyword>
<keyword id="KW-0698">rRNA processing</keyword>
<keyword id="KW-0808">Transferase</keyword>
<gene>
    <name type="primary">nol9</name>
    <name type="ORF">DDB_G0277945</name>
</gene>
<comment type="function">
    <text evidence="1">Polynucleotide 5'-kinase involved in rRNA processing.</text>
</comment>
<comment type="subcellular location">
    <subcellularLocation>
        <location evidence="1">Nucleus</location>
        <location evidence="1">Nucleolus</location>
    </subcellularLocation>
</comment>
<comment type="similarity">
    <text evidence="4">Belongs to the Clp1 family. NOL9/GRC3 subfamily.</text>
</comment>
<name>NOL9_DICDI</name>